<protein>
    <recommendedName>
        <fullName evidence="1">Large ribosomal subunit protein uL4</fullName>
    </recommendedName>
    <alternativeName>
        <fullName evidence="3">50S ribosomal protein L4</fullName>
    </alternativeName>
</protein>
<feature type="chain" id="PRO_1000086512" description="Large ribosomal subunit protein uL4">
    <location>
        <begin position="1"/>
        <end position="206"/>
    </location>
</feature>
<feature type="region of interest" description="Disordered" evidence="2">
    <location>
        <begin position="47"/>
        <end position="77"/>
    </location>
</feature>
<gene>
    <name evidence="1" type="primary">rplD</name>
    <name type="ordered locus">Cbei_0152</name>
</gene>
<dbReference type="EMBL" id="CP000721">
    <property type="protein sequence ID" value="ABR32342.1"/>
    <property type="molecule type" value="Genomic_DNA"/>
</dbReference>
<dbReference type="RefSeq" id="WP_011967512.1">
    <property type="nucleotide sequence ID" value="NC_009617.1"/>
</dbReference>
<dbReference type="SMR" id="A6LPR2"/>
<dbReference type="GeneID" id="66343042"/>
<dbReference type="KEGG" id="cbe:Cbei_0152"/>
<dbReference type="eggNOG" id="COG0088">
    <property type="taxonomic scope" value="Bacteria"/>
</dbReference>
<dbReference type="HOGENOM" id="CLU_041575_5_2_9"/>
<dbReference type="Proteomes" id="UP000000565">
    <property type="component" value="Chromosome"/>
</dbReference>
<dbReference type="GO" id="GO:1990904">
    <property type="term" value="C:ribonucleoprotein complex"/>
    <property type="evidence" value="ECO:0007669"/>
    <property type="project" value="UniProtKB-KW"/>
</dbReference>
<dbReference type="GO" id="GO:0005840">
    <property type="term" value="C:ribosome"/>
    <property type="evidence" value="ECO:0007669"/>
    <property type="project" value="UniProtKB-KW"/>
</dbReference>
<dbReference type="GO" id="GO:0019843">
    <property type="term" value="F:rRNA binding"/>
    <property type="evidence" value="ECO:0007669"/>
    <property type="project" value="UniProtKB-UniRule"/>
</dbReference>
<dbReference type="GO" id="GO:0003735">
    <property type="term" value="F:structural constituent of ribosome"/>
    <property type="evidence" value="ECO:0007669"/>
    <property type="project" value="InterPro"/>
</dbReference>
<dbReference type="GO" id="GO:0006412">
    <property type="term" value="P:translation"/>
    <property type="evidence" value="ECO:0007669"/>
    <property type="project" value="UniProtKB-UniRule"/>
</dbReference>
<dbReference type="Gene3D" id="3.40.1370.10">
    <property type="match status" value="1"/>
</dbReference>
<dbReference type="HAMAP" id="MF_01328_B">
    <property type="entry name" value="Ribosomal_uL4_B"/>
    <property type="match status" value="1"/>
</dbReference>
<dbReference type="InterPro" id="IPR002136">
    <property type="entry name" value="Ribosomal_uL4"/>
</dbReference>
<dbReference type="InterPro" id="IPR013005">
    <property type="entry name" value="Ribosomal_uL4-like"/>
</dbReference>
<dbReference type="InterPro" id="IPR023574">
    <property type="entry name" value="Ribosomal_uL4_dom_sf"/>
</dbReference>
<dbReference type="NCBIfam" id="TIGR03953">
    <property type="entry name" value="rplD_bact"/>
    <property type="match status" value="1"/>
</dbReference>
<dbReference type="PANTHER" id="PTHR10746">
    <property type="entry name" value="50S RIBOSOMAL PROTEIN L4"/>
    <property type="match status" value="1"/>
</dbReference>
<dbReference type="PANTHER" id="PTHR10746:SF6">
    <property type="entry name" value="LARGE RIBOSOMAL SUBUNIT PROTEIN UL4M"/>
    <property type="match status" value="1"/>
</dbReference>
<dbReference type="Pfam" id="PF00573">
    <property type="entry name" value="Ribosomal_L4"/>
    <property type="match status" value="1"/>
</dbReference>
<dbReference type="SUPFAM" id="SSF52166">
    <property type="entry name" value="Ribosomal protein L4"/>
    <property type="match status" value="1"/>
</dbReference>
<sequence>MPTVGVFNKEGNKVADMELNENVFAAEINEYALHQVVVALLANKRQGTQSTKTRSEVRGGGIKPWRQKGTGRARQGSIRSPQWIKGGIVFAPKPRDYRVSVPKSMRKVAMKSALTSKVQDNQMIVLDSLNFEAPKTKSMIEMLKALEANKALIITAESNEVVYKSARNIQGISVIPANNINVYDLLKYEKLIITKDAVSKIEEVYA</sequence>
<accession>A6LPR2</accession>
<keyword id="KW-0687">Ribonucleoprotein</keyword>
<keyword id="KW-0689">Ribosomal protein</keyword>
<keyword id="KW-0694">RNA-binding</keyword>
<keyword id="KW-0699">rRNA-binding</keyword>
<evidence type="ECO:0000255" key="1">
    <source>
        <dbReference type="HAMAP-Rule" id="MF_01328"/>
    </source>
</evidence>
<evidence type="ECO:0000256" key="2">
    <source>
        <dbReference type="SAM" id="MobiDB-lite"/>
    </source>
</evidence>
<evidence type="ECO:0000305" key="3"/>
<proteinExistence type="inferred from homology"/>
<organism>
    <name type="scientific">Clostridium beijerinckii (strain ATCC 51743 / NCIMB 8052)</name>
    <name type="common">Clostridium acetobutylicum</name>
    <dbReference type="NCBI Taxonomy" id="290402"/>
    <lineage>
        <taxon>Bacteria</taxon>
        <taxon>Bacillati</taxon>
        <taxon>Bacillota</taxon>
        <taxon>Clostridia</taxon>
        <taxon>Eubacteriales</taxon>
        <taxon>Clostridiaceae</taxon>
        <taxon>Clostridium</taxon>
    </lineage>
</organism>
<name>RL4_CLOB8</name>
<comment type="function">
    <text evidence="1">One of the primary rRNA binding proteins, this protein initially binds near the 5'-end of the 23S rRNA. It is important during the early stages of 50S assembly. It makes multiple contacts with different domains of the 23S rRNA in the assembled 50S subunit and ribosome.</text>
</comment>
<comment type="function">
    <text evidence="1">Forms part of the polypeptide exit tunnel.</text>
</comment>
<comment type="subunit">
    <text evidence="1">Part of the 50S ribosomal subunit.</text>
</comment>
<comment type="similarity">
    <text evidence="1">Belongs to the universal ribosomal protein uL4 family.</text>
</comment>
<reference key="1">
    <citation type="submission" date="2007-06" db="EMBL/GenBank/DDBJ databases">
        <title>Complete sequence of Clostridium beijerinckii NCIMB 8052.</title>
        <authorList>
            <consortium name="US DOE Joint Genome Institute"/>
            <person name="Copeland A."/>
            <person name="Lucas S."/>
            <person name="Lapidus A."/>
            <person name="Barry K."/>
            <person name="Detter J.C."/>
            <person name="Glavina del Rio T."/>
            <person name="Hammon N."/>
            <person name="Israni S."/>
            <person name="Dalin E."/>
            <person name="Tice H."/>
            <person name="Pitluck S."/>
            <person name="Sims D."/>
            <person name="Brettin T."/>
            <person name="Bruce D."/>
            <person name="Tapia R."/>
            <person name="Brainard J."/>
            <person name="Schmutz J."/>
            <person name="Larimer F."/>
            <person name="Land M."/>
            <person name="Hauser L."/>
            <person name="Kyrpides N."/>
            <person name="Mikhailova N."/>
            <person name="Bennet G."/>
            <person name="Cann I."/>
            <person name="Chen J.-S."/>
            <person name="Contreras A.L."/>
            <person name="Jones D."/>
            <person name="Kashket E."/>
            <person name="Mitchell W."/>
            <person name="Stoddard S."/>
            <person name="Schwarz W."/>
            <person name="Qureshi N."/>
            <person name="Young M."/>
            <person name="Shi Z."/>
            <person name="Ezeji T."/>
            <person name="White B."/>
            <person name="Blaschek H."/>
            <person name="Richardson P."/>
        </authorList>
    </citation>
    <scope>NUCLEOTIDE SEQUENCE [LARGE SCALE GENOMIC DNA]</scope>
    <source>
        <strain>ATCC 51743 / NCIMB 8052</strain>
    </source>
</reference>